<dbReference type="EMBL" id="CP001175">
    <property type="protein sequence ID" value="ACK40959.1"/>
    <property type="molecule type" value="Genomic_DNA"/>
</dbReference>
<dbReference type="RefSeq" id="WP_003721669.1">
    <property type="nucleotide sequence ID" value="NC_011660.1"/>
</dbReference>
<dbReference type="SMR" id="B8DAM0"/>
<dbReference type="GeneID" id="93237944"/>
<dbReference type="KEGG" id="lmh:LMHCC_2624"/>
<dbReference type="HOGENOM" id="CLU_148710_2_2_9"/>
<dbReference type="GO" id="GO:0022627">
    <property type="term" value="C:cytosolic small ribosomal subunit"/>
    <property type="evidence" value="ECO:0007669"/>
    <property type="project" value="TreeGrafter"/>
</dbReference>
<dbReference type="GO" id="GO:0070181">
    <property type="term" value="F:small ribosomal subunit rRNA binding"/>
    <property type="evidence" value="ECO:0007669"/>
    <property type="project" value="TreeGrafter"/>
</dbReference>
<dbReference type="GO" id="GO:0003735">
    <property type="term" value="F:structural constituent of ribosome"/>
    <property type="evidence" value="ECO:0007669"/>
    <property type="project" value="InterPro"/>
</dbReference>
<dbReference type="GO" id="GO:0006412">
    <property type="term" value="P:translation"/>
    <property type="evidence" value="ECO:0007669"/>
    <property type="project" value="UniProtKB-UniRule"/>
</dbReference>
<dbReference type="FunFam" id="4.10.640.10:FF:000003">
    <property type="entry name" value="30S ribosomal protein S18"/>
    <property type="match status" value="1"/>
</dbReference>
<dbReference type="Gene3D" id="4.10.640.10">
    <property type="entry name" value="Ribosomal protein S18"/>
    <property type="match status" value="1"/>
</dbReference>
<dbReference type="HAMAP" id="MF_00270">
    <property type="entry name" value="Ribosomal_bS18"/>
    <property type="match status" value="1"/>
</dbReference>
<dbReference type="InterPro" id="IPR001648">
    <property type="entry name" value="Ribosomal_bS18"/>
</dbReference>
<dbReference type="InterPro" id="IPR018275">
    <property type="entry name" value="Ribosomal_bS18_CS"/>
</dbReference>
<dbReference type="InterPro" id="IPR036870">
    <property type="entry name" value="Ribosomal_bS18_sf"/>
</dbReference>
<dbReference type="NCBIfam" id="TIGR00165">
    <property type="entry name" value="S18"/>
    <property type="match status" value="1"/>
</dbReference>
<dbReference type="PANTHER" id="PTHR13479">
    <property type="entry name" value="30S RIBOSOMAL PROTEIN S18"/>
    <property type="match status" value="1"/>
</dbReference>
<dbReference type="PANTHER" id="PTHR13479:SF40">
    <property type="entry name" value="SMALL RIBOSOMAL SUBUNIT PROTEIN BS18M"/>
    <property type="match status" value="1"/>
</dbReference>
<dbReference type="Pfam" id="PF01084">
    <property type="entry name" value="Ribosomal_S18"/>
    <property type="match status" value="1"/>
</dbReference>
<dbReference type="PRINTS" id="PR00974">
    <property type="entry name" value="RIBOSOMALS18"/>
</dbReference>
<dbReference type="SUPFAM" id="SSF46911">
    <property type="entry name" value="Ribosomal protein S18"/>
    <property type="match status" value="1"/>
</dbReference>
<dbReference type="PROSITE" id="PS00057">
    <property type="entry name" value="RIBOSOMAL_S18"/>
    <property type="match status" value="1"/>
</dbReference>
<organism>
    <name type="scientific">Listeria monocytogenes serotype 4a (strain HCC23)</name>
    <dbReference type="NCBI Taxonomy" id="552536"/>
    <lineage>
        <taxon>Bacteria</taxon>
        <taxon>Bacillati</taxon>
        <taxon>Bacillota</taxon>
        <taxon>Bacilli</taxon>
        <taxon>Bacillales</taxon>
        <taxon>Listeriaceae</taxon>
        <taxon>Listeria</taxon>
    </lineage>
</organism>
<sequence length="79" mass="9098">MAGGRRGGRRRKKVCYFTSNGITHIDYKDVELLKKFVSERGKILPRRVTGTSAKYQRKLTVAIKRSRQMALLPFVAEEK</sequence>
<proteinExistence type="inferred from homology"/>
<comment type="function">
    <text evidence="1">Binds as a heterodimer with protein bS6 to the central domain of the 16S rRNA, where it helps stabilize the platform of the 30S subunit.</text>
</comment>
<comment type="subunit">
    <text evidence="1">Part of the 30S ribosomal subunit. Forms a tight heterodimer with protein bS6.</text>
</comment>
<comment type="similarity">
    <text evidence="1">Belongs to the bacterial ribosomal protein bS18 family.</text>
</comment>
<reference key="1">
    <citation type="journal article" date="2011" name="J. Bacteriol.">
        <title>Genome sequence of lineage III Listeria monocytogenes strain HCC23.</title>
        <authorList>
            <person name="Steele C.L."/>
            <person name="Donaldson J.R."/>
            <person name="Paul D."/>
            <person name="Banes M.M."/>
            <person name="Arick T."/>
            <person name="Bridges S.M."/>
            <person name="Lawrence M.L."/>
        </authorList>
    </citation>
    <scope>NUCLEOTIDE SEQUENCE [LARGE SCALE GENOMIC DNA]</scope>
    <source>
        <strain>HCC23</strain>
    </source>
</reference>
<evidence type="ECO:0000255" key="1">
    <source>
        <dbReference type="HAMAP-Rule" id="MF_00270"/>
    </source>
</evidence>
<evidence type="ECO:0000305" key="2"/>
<gene>
    <name evidence="1" type="primary">rpsR</name>
    <name type="ordered locus">LMHCC_2624</name>
</gene>
<keyword id="KW-0687">Ribonucleoprotein</keyword>
<keyword id="KW-0689">Ribosomal protein</keyword>
<keyword id="KW-0694">RNA-binding</keyword>
<keyword id="KW-0699">rRNA-binding</keyword>
<accession>B8DAM0</accession>
<protein>
    <recommendedName>
        <fullName evidence="1">Small ribosomal subunit protein bS18</fullName>
    </recommendedName>
    <alternativeName>
        <fullName evidence="2">30S ribosomal protein S18</fullName>
    </alternativeName>
</protein>
<feature type="chain" id="PRO_1000196519" description="Small ribosomal subunit protein bS18">
    <location>
        <begin position="1"/>
        <end position="79"/>
    </location>
</feature>
<name>RS18_LISMH</name>